<protein>
    <recommendedName>
        <fullName evidence="1">Hydroxyethylthiazole kinase</fullName>
        <ecNumber evidence="1">2.7.1.50</ecNumber>
    </recommendedName>
    <alternativeName>
        <fullName evidence="1">4-methyl-5-beta-hydroxyethylthiazole kinase</fullName>
        <shortName evidence="1">TH kinase</shortName>
        <shortName evidence="1">Thz kinase</shortName>
    </alternativeName>
</protein>
<proteinExistence type="inferred from homology"/>
<keyword id="KW-0067">ATP-binding</keyword>
<keyword id="KW-0418">Kinase</keyword>
<keyword id="KW-0460">Magnesium</keyword>
<keyword id="KW-0479">Metal-binding</keyword>
<keyword id="KW-0547">Nucleotide-binding</keyword>
<keyword id="KW-0784">Thiamine biosynthesis</keyword>
<keyword id="KW-0808">Transferase</keyword>
<reference key="1">
    <citation type="journal article" date="2008" name="BMC Genomics">
        <title>Comparative genomic analysis of the gut bacterium Bifidobacterium longum reveals loci susceptible to deletion during pure culture growth.</title>
        <authorList>
            <person name="Lee J.H."/>
            <person name="Karamychev V.N."/>
            <person name="Kozyavkin S.A."/>
            <person name="Mills D."/>
            <person name="Pavlov A.R."/>
            <person name="Pavlova N.V."/>
            <person name="Polouchine N.N."/>
            <person name="Richardson P.M."/>
            <person name="Shakhova V.V."/>
            <person name="Slesarev A.I."/>
            <person name="Weimer B."/>
            <person name="O'Sullivan D.J."/>
        </authorList>
    </citation>
    <scope>NUCLEOTIDE SEQUENCE [LARGE SCALE GENOMIC DNA]</scope>
    <source>
        <strain>DJO10A</strain>
    </source>
</reference>
<organism>
    <name type="scientific">Bifidobacterium longum (strain DJO10A)</name>
    <dbReference type="NCBI Taxonomy" id="205913"/>
    <lineage>
        <taxon>Bacteria</taxon>
        <taxon>Bacillati</taxon>
        <taxon>Actinomycetota</taxon>
        <taxon>Actinomycetes</taxon>
        <taxon>Bifidobacteriales</taxon>
        <taxon>Bifidobacteriaceae</taxon>
        <taxon>Bifidobacterium</taxon>
    </lineage>
</organism>
<sequence>MSNSASSFTGVSSGYTAGTPVPADSPIRDNIADAVRRVRETTPLAQSFTTFVTINLVANAQLAAGGTAAMSFLPDDVIETAKIAGANYINVGTLLPFYKDALPEIAQRLNYLDKPWVLDPVAAGIGRTRTAILQAFKAAPPTMIRANASEVIALANMWGLNTETVGDASEHRPAGVESVDDVESATGAAVALAQYLTEQHAKHSSHDASTRCAVAVSGIADLVTDGETVYRLPGGSAMMTKITGAGCSLGGVAATYLAVSDPLTAALSASLLYNRAGEVADTTSHGPGSFQVAFLDALWNVTAEQVAESEILVQ</sequence>
<gene>
    <name evidence="1" type="primary">thiM</name>
    <name type="ordered locus">BLD_0133</name>
</gene>
<accession>B3DQ80</accession>
<name>THIM_BIFLD</name>
<evidence type="ECO:0000255" key="1">
    <source>
        <dbReference type="HAMAP-Rule" id="MF_00228"/>
    </source>
</evidence>
<dbReference type="EC" id="2.7.1.50" evidence="1"/>
<dbReference type="EMBL" id="CP000605">
    <property type="protein sequence ID" value="ACD97579.1"/>
    <property type="molecule type" value="Genomic_DNA"/>
</dbReference>
<dbReference type="RefSeq" id="WP_012471774.1">
    <property type="nucleotide sequence ID" value="NC_010816.1"/>
</dbReference>
<dbReference type="SMR" id="B3DQ80"/>
<dbReference type="KEGG" id="blj:BLD_0133"/>
<dbReference type="HOGENOM" id="CLU_019943_0_1_11"/>
<dbReference type="UniPathway" id="UPA00060">
    <property type="reaction ID" value="UER00139"/>
</dbReference>
<dbReference type="Proteomes" id="UP000002419">
    <property type="component" value="Chromosome"/>
</dbReference>
<dbReference type="GO" id="GO:0005524">
    <property type="term" value="F:ATP binding"/>
    <property type="evidence" value="ECO:0007669"/>
    <property type="project" value="UniProtKB-UniRule"/>
</dbReference>
<dbReference type="GO" id="GO:0004417">
    <property type="term" value="F:hydroxyethylthiazole kinase activity"/>
    <property type="evidence" value="ECO:0007669"/>
    <property type="project" value="UniProtKB-UniRule"/>
</dbReference>
<dbReference type="GO" id="GO:0000287">
    <property type="term" value="F:magnesium ion binding"/>
    <property type="evidence" value="ECO:0007669"/>
    <property type="project" value="UniProtKB-UniRule"/>
</dbReference>
<dbReference type="GO" id="GO:0009228">
    <property type="term" value="P:thiamine biosynthetic process"/>
    <property type="evidence" value="ECO:0007669"/>
    <property type="project" value="UniProtKB-KW"/>
</dbReference>
<dbReference type="GO" id="GO:0009229">
    <property type="term" value="P:thiamine diphosphate biosynthetic process"/>
    <property type="evidence" value="ECO:0007669"/>
    <property type="project" value="UniProtKB-UniRule"/>
</dbReference>
<dbReference type="CDD" id="cd01170">
    <property type="entry name" value="THZ_kinase"/>
    <property type="match status" value="1"/>
</dbReference>
<dbReference type="Gene3D" id="3.40.1190.20">
    <property type="match status" value="1"/>
</dbReference>
<dbReference type="HAMAP" id="MF_00228">
    <property type="entry name" value="Thz_kinase"/>
    <property type="match status" value="1"/>
</dbReference>
<dbReference type="InterPro" id="IPR000417">
    <property type="entry name" value="Hyethyz_kinase"/>
</dbReference>
<dbReference type="InterPro" id="IPR029056">
    <property type="entry name" value="Ribokinase-like"/>
</dbReference>
<dbReference type="Pfam" id="PF02110">
    <property type="entry name" value="HK"/>
    <property type="match status" value="1"/>
</dbReference>
<dbReference type="PIRSF" id="PIRSF000513">
    <property type="entry name" value="Thz_kinase"/>
    <property type="match status" value="1"/>
</dbReference>
<dbReference type="PRINTS" id="PR01099">
    <property type="entry name" value="HYETHTZKNASE"/>
</dbReference>
<dbReference type="SUPFAM" id="SSF53613">
    <property type="entry name" value="Ribokinase-like"/>
    <property type="match status" value="1"/>
</dbReference>
<comment type="function">
    <text evidence="1">Catalyzes the phosphorylation of the hydroxyl group of 4-methyl-5-beta-hydroxyethylthiazole (THZ).</text>
</comment>
<comment type="catalytic activity">
    <reaction evidence="1">
        <text>5-(2-hydroxyethyl)-4-methylthiazole + ATP = 4-methyl-5-(2-phosphooxyethyl)-thiazole + ADP + H(+)</text>
        <dbReference type="Rhea" id="RHEA:24212"/>
        <dbReference type="ChEBI" id="CHEBI:15378"/>
        <dbReference type="ChEBI" id="CHEBI:17957"/>
        <dbReference type="ChEBI" id="CHEBI:30616"/>
        <dbReference type="ChEBI" id="CHEBI:58296"/>
        <dbReference type="ChEBI" id="CHEBI:456216"/>
        <dbReference type="EC" id="2.7.1.50"/>
    </reaction>
</comment>
<comment type="cofactor">
    <cofactor evidence="1">
        <name>Mg(2+)</name>
        <dbReference type="ChEBI" id="CHEBI:18420"/>
    </cofactor>
</comment>
<comment type="pathway">
    <text evidence="1">Cofactor biosynthesis; thiamine diphosphate biosynthesis; 4-methyl-5-(2-phosphoethyl)-thiazole from 5-(2-hydroxyethyl)-4-methylthiazole: step 1/1.</text>
</comment>
<comment type="similarity">
    <text evidence="1">Belongs to the Thz kinase family.</text>
</comment>
<feature type="chain" id="PRO_0000383824" description="Hydroxyethylthiazole kinase">
    <location>
        <begin position="1"/>
        <end position="314"/>
    </location>
</feature>
<feature type="binding site" evidence="1">
    <location>
        <position position="70"/>
    </location>
    <ligand>
        <name>substrate</name>
    </ligand>
</feature>
<feature type="binding site" evidence="1">
    <location>
        <position position="145"/>
    </location>
    <ligand>
        <name>ATP</name>
        <dbReference type="ChEBI" id="CHEBI:30616"/>
    </ligand>
</feature>
<feature type="binding site" evidence="1">
    <location>
        <position position="217"/>
    </location>
    <ligand>
        <name>ATP</name>
        <dbReference type="ChEBI" id="CHEBI:30616"/>
    </ligand>
</feature>
<feature type="binding site" evidence="1">
    <location>
        <position position="244"/>
    </location>
    <ligand>
        <name>substrate</name>
    </ligand>
</feature>